<name>APT3_ARATH</name>
<organism>
    <name type="scientific">Arabidopsis thaliana</name>
    <name type="common">Mouse-ear cress</name>
    <dbReference type="NCBI Taxonomy" id="3702"/>
    <lineage>
        <taxon>Eukaryota</taxon>
        <taxon>Viridiplantae</taxon>
        <taxon>Streptophyta</taxon>
        <taxon>Embryophyta</taxon>
        <taxon>Tracheophyta</taxon>
        <taxon>Spermatophyta</taxon>
        <taxon>Magnoliopsida</taxon>
        <taxon>eudicotyledons</taxon>
        <taxon>Gunneridae</taxon>
        <taxon>Pentapetalae</taxon>
        <taxon>rosids</taxon>
        <taxon>malvids</taxon>
        <taxon>Brassicales</taxon>
        <taxon>Brassicaceae</taxon>
        <taxon>Camelineae</taxon>
        <taxon>Arabidopsis</taxon>
    </lineage>
</organism>
<protein>
    <recommendedName>
        <fullName>Adenine phosphoribosyltransferase 3</fullName>
        <ecNumber>2.4.2.7</ecNumber>
    </recommendedName>
</protein>
<sequence length="183" mass="20352">MSGNKEEEDPRIHGIKTKIRVVPDFPKKGIMFQDITTVLLDPKAFKDTIDLFVERYRDKNISVVAGIEARGFLFGPPIALAIGAKFVPLRKPKKLPGETIFEEYELEYGNDRLEMHIGAVEAGDRALVVDDLIATGGTLCAAINLLERVGAEVVECACVIELPELKGRQRLKGKPLCMLVEYR</sequence>
<dbReference type="EC" id="2.4.2.7"/>
<dbReference type="EMBL" id="AL033545">
    <property type="protein sequence ID" value="CAA22162.1"/>
    <property type="molecule type" value="Genomic_DNA"/>
</dbReference>
<dbReference type="EMBL" id="AL161557">
    <property type="protein sequence ID" value="CAB79212.1"/>
    <property type="molecule type" value="Genomic_DNA"/>
</dbReference>
<dbReference type="EMBL" id="CP002687">
    <property type="protein sequence ID" value="AEE84625.1"/>
    <property type="molecule type" value="Genomic_DNA"/>
</dbReference>
<dbReference type="EMBL" id="BT002969">
    <property type="protein sequence ID" value="AAO22778.1"/>
    <property type="molecule type" value="mRNA"/>
</dbReference>
<dbReference type="EMBL" id="BT004412">
    <property type="protein sequence ID" value="AAO42406.1"/>
    <property type="molecule type" value="mRNA"/>
</dbReference>
<dbReference type="EMBL" id="AY084513">
    <property type="protein sequence ID" value="AAM61081.1"/>
    <property type="molecule type" value="mRNA"/>
</dbReference>
<dbReference type="PIR" id="T05451">
    <property type="entry name" value="T05451"/>
</dbReference>
<dbReference type="RefSeq" id="NP_193988.1">
    <property type="nucleotide sequence ID" value="NM_118383.4"/>
</dbReference>
<dbReference type="SMR" id="Q9SUW2"/>
<dbReference type="BioGRID" id="13642">
    <property type="interactions" value="3"/>
</dbReference>
<dbReference type="FunCoup" id="Q9SUW2">
    <property type="interactions" value="1928"/>
</dbReference>
<dbReference type="IntAct" id="Q9SUW2">
    <property type="interactions" value="3"/>
</dbReference>
<dbReference type="STRING" id="3702.Q9SUW2"/>
<dbReference type="PaxDb" id="3702-AT4G22570.1"/>
<dbReference type="ProteomicsDB" id="244455"/>
<dbReference type="EnsemblPlants" id="AT4G22570.1">
    <property type="protein sequence ID" value="AT4G22570.1"/>
    <property type="gene ID" value="AT4G22570"/>
</dbReference>
<dbReference type="GeneID" id="828353"/>
<dbReference type="Gramene" id="AT4G22570.1">
    <property type="protein sequence ID" value="AT4G22570.1"/>
    <property type="gene ID" value="AT4G22570"/>
</dbReference>
<dbReference type="KEGG" id="ath:AT4G22570"/>
<dbReference type="Araport" id="AT4G22570"/>
<dbReference type="TAIR" id="AT4G22570">
    <property type="gene designation" value="APT3"/>
</dbReference>
<dbReference type="eggNOG" id="KOG1712">
    <property type="taxonomic scope" value="Eukaryota"/>
</dbReference>
<dbReference type="HOGENOM" id="CLU_063339_0_3_1"/>
<dbReference type="InParanoid" id="Q9SUW2"/>
<dbReference type="OMA" id="QAYDLEY"/>
<dbReference type="OrthoDB" id="363185at2759"/>
<dbReference type="PhylomeDB" id="Q9SUW2"/>
<dbReference type="BioCyc" id="ARA:AT4G22570-MONOMER"/>
<dbReference type="UniPathway" id="UPA00588">
    <property type="reaction ID" value="UER00646"/>
</dbReference>
<dbReference type="CD-CODE" id="4299E36E">
    <property type="entry name" value="Nucleolus"/>
</dbReference>
<dbReference type="PRO" id="PR:Q9SUW2"/>
<dbReference type="Proteomes" id="UP000006548">
    <property type="component" value="Chromosome 4"/>
</dbReference>
<dbReference type="ExpressionAtlas" id="Q9SUW2">
    <property type="expression patterns" value="baseline and differential"/>
</dbReference>
<dbReference type="GO" id="GO:0005829">
    <property type="term" value="C:cytosol"/>
    <property type="evidence" value="ECO:0000314"/>
    <property type="project" value="TAIR"/>
</dbReference>
<dbReference type="GO" id="GO:0003999">
    <property type="term" value="F:adenine phosphoribosyltransferase activity"/>
    <property type="evidence" value="ECO:0000314"/>
    <property type="project" value="TAIR"/>
</dbReference>
<dbReference type="GO" id="GO:0006168">
    <property type="term" value="P:adenine salvage"/>
    <property type="evidence" value="ECO:0000304"/>
    <property type="project" value="TAIR"/>
</dbReference>
<dbReference type="GO" id="GO:0044209">
    <property type="term" value="P:AMP salvage"/>
    <property type="evidence" value="ECO:0007669"/>
    <property type="project" value="UniProtKB-UniPathway"/>
</dbReference>
<dbReference type="GO" id="GO:0006166">
    <property type="term" value="P:purine ribonucleoside salvage"/>
    <property type="evidence" value="ECO:0007669"/>
    <property type="project" value="UniProtKB-KW"/>
</dbReference>
<dbReference type="CDD" id="cd06223">
    <property type="entry name" value="PRTases_typeI"/>
    <property type="match status" value="1"/>
</dbReference>
<dbReference type="FunFam" id="3.40.50.2020:FF:000022">
    <property type="entry name" value="Adenine phosphoribosyltransferase 1"/>
    <property type="match status" value="1"/>
</dbReference>
<dbReference type="Gene3D" id="3.40.50.2020">
    <property type="match status" value="1"/>
</dbReference>
<dbReference type="HAMAP" id="MF_00004">
    <property type="entry name" value="Aden_phosphoribosyltr"/>
    <property type="match status" value="1"/>
</dbReference>
<dbReference type="InterPro" id="IPR005764">
    <property type="entry name" value="Ade_phspho_trans"/>
</dbReference>
<dbReference type="InterPro" id="IPR050120">
    <property type="entry name" value="Adenine_PRTase"/>
</dbReference>
<dbReference type="InterPro" id="IPR000836">
    <property type="entry name" value="PRibTrfase_dom"/>
</dbReference>
<dbReference type="InterPro" id="IPR029057">
    <property type="entry name" value="PRTase-like"/>
</dbReference>
<dbReference type="NCBIfam" id="TIGR01090">
    <property type="entry name" value="apt"/>
    <property type="match status" value="1"/>
</dbReference>
<dbReference type="NCBIfam" id="NF002634">
    <property type="entry name" value="PRK02304.1-3"/>
    <property type="match status" value="1"/>
</dbReference>
<dbReference type="NCBIfam" id="NF002636">
    <property type="entry name" value="PRK02304.1-5"/>
    <property type="match status" value="1"/>
</dbReference>
<dbReference type="PANTHER" id="PTHR11776">
    <property type="entry name" value="ADENINE PHOSPHORIBOSYLTRANSFERASE"/>
    <property type="match status" value="1"/>
</dbReference>
<dbReference type="PANTHER" id="PTHR11776:SF7">
    <property type="entry name" value="PHOSPHORIBOSYLTRANSFERASE DOMAIN-CONTAINING PROTEIN"/>
    <property type="match status" value="1"/>
</dbReference>
<dbReference type="Pfam" id="PF00156">
    <property type="entry name" value="Pribosyltran"/>
    <property type="match status" value="1"/>
</dbReference>
<dbReference type="SUPFAM" id="SSF53271">
    <property type="entry name" value="PRTase-like"/>
    <property type="match status" value="1"/>
</dbReference>
<dbReference type="PROSITE" id="PS00103">
    <property type="entry name" value="PUR_PYR_PR_TRANSFER"/>
    <property type="match status" value="1"/>
</dbReference>
<keyword id="KW-0963">Cytoplasm</keyword>
<keyword id="KW-0328">Glycosyltransferase</keyword>
<keyword id="KW-0660">Purine salvage</keyword>
<keyword id="KW-1185">Reference proteome</keyword>
<keyword id="KW-0808">Transferase</keyword>
<reference key="1">
    <citation type="journal article" date="1999" name="Nature">
        <title>Sequence and analysis of chromosome 4 of the plant Arabidopsis thaliana.</title>
        <authorList>
            <person name="Mayer K.F.X."/>
            <person name="Schueller C."/>
            <person name="Wambutt R."/>
            <person name="Murphy G."/>
            <person name="Volckaert G."/>
            <person name="Pohl T."/>
            <person name="Duesterhoeft A."/>
            <person name="Stiekema W."/>
            <person name="Entian K.-D."/>
            <person name="Terryn N."/>
            <person name="Harris B."/>
            <person name="Ansorge W."/>
            <person name="Brandt P."/>
            <person name="Grivell L.A."/>
            <person name="Rieger M."/>
            <person name="Weichselgartner M."/>
            <person name="de Simone V."/>
            <person name="Obermaier B."/>
            <person name="Mache R."/>
            <person name="Mueller M."/>
            <person name="Kreis M."/>
            <person name="Delseny M."/>
            <person name="Puigdomenech P."/>
            <person name="Watson M."/>
            <person name="Schmidtheini T."/>
            <person name="Reichert B."/>
            <person name="Portetelle D."/>
            <person name="Perez-Alonso M."/>
            <person name="Boutry M."/>
            <person name="Bancroft I."/>
            <person name="Vos P."/>
            <person name="Hoheisel J."/>
            <person name="Zimmermann W."/>
            <person name="Wedler H."/>
            <person name="Ridley P."/>
            <person name="Langham S.-A."/>
            <person name="McCullagh B."/>
            <person name="Bilham L."/>
            <person name="Robben J."/>
            <person name="van der Schueren J."/>
            <person name="Grymonprez B."/>
            <person name="Chuang Y.-J."/>
            <person name="Vandenbussche F."/>
            <person name="Braeken M."/>
            <person name="Weltjens I."/>
            <person name="Voet M."/>
            <person name="Bastiaens I."/>
            <person name="Aert R."/>
            <person name="Defoor E."/>
            <person name="Weitzenegger T."/>
            <person name="Bothe G."/>
            <person name="Ramsperger U."/>
            <person name="Hilbert H."/>
            <person name="Braun M."/>
            <person name="Holzer E."/>
            <person name="Brandt A."/>
            <person name="Peters S."/>
            <person name="van Staveren M."/>
            <person name="Dirkse W."/>
            <person name="Mooijman P."/>
            <person name="Klein Lankhorst R."/>
            <person name="Rose M."/>
            <person name="Hauf J."/>
            <person name="Koetter P."/>
            <person name="Berneiser S."/>
            <person name="Hempel S."/>
            <person name="Feldpausch M."/>
            <person name="Lamberth S."/>
            <person name="Van den Daele H."/>
            <person name="De Keyser A."/>
            <person name="Buysshaert C."/>
            <person name="Gielen J."/>
            <person name="Villarroel R."/>
            <person name="De Clercq R."/>
            <person name="van Montagu M."/>
            <person name="Rogers J."/>
            <person name="Cronin A."/>
            <person name="Quail M.A."/>
            <person name="Bray-Allen S."/>
            <person name="Clark L."/>
            <person name="Doggett J."/>
            <person name="Hall S."/>
            <person name="Kay M."/>
            <person name="Lennard N."/>
            <person name="McLay K."/>
            <person name="Mayes R."/>
            <person name="Pettett A."/>
            <person name="Rajandream M.A."/>
            <person name="Lyne M."/>
            <person name="Benes V."/>
            <person name="Rechmann S."/>
            <person name="Borkova D."/>
            <person name="Bloecker H."/>
            <person name="Scharfe M."/>
            <person name="Grimm M."/>
            <person name="Loehnert T.-H."/>
            <person name="Dose S."/>
            <person name="de Haan M."/>
            <person name="Maarse A.C."/>
            <person name="Schaefer M."/>
            <person name="Mueller-Auer S."/>
            <person name="Gabel C."/>
            <person name="Fuchs M."/>
            <person name="Fartmann B."/>
            <person name="Granderath K."/>
            <person name="Dauner D."/>
            <person name="Herzl A."/>
            <person name="Neumann S."/>
            <person name="Argiriou A."/>
            <person name="Vitale D."/>
            <person name="Liguori R."/>
            <person name="Piravandi E."/>
            <person name="Massenet O."/>
            <person name="Quigley F."/>
            <person name="Clabauld G."/>
            <person name="Muendlein A."/>
            <person name="Felber R."/>
            <person name="Schnabl S."/>
            <person name="Hiller R."/>
            <person name="Schmidt W."/>
            <person name="Lecharny A."/>
            <person name="Aubourg S."/>
            <person name="Chefdor F."/>
            <person name="Cooke R."/>
            <person name="Berger C."/>
            <person name="Monfort A."/>
            <person name="Casacuberta E."/>
            <person name="Gibbons T."/>
            <person name="Weber N."/>
            <person name="Vandenbol M."/>
            <person name="Bargues M."/>
            <person name="Terol J."/>
            <person name="Torres A."/>
            <person name="Perez-Perez A."/>
            <person name="Purnelle B."/>
            <person name="Bent E."/>
            <person name="Johnson S."/>
            <person name="Tacon D."/>
            <person name="Jesse T."/>
            <person name="Heijnen L."/>
            <person name="Schwarz S."/>
            <person name="Scholler P."/>
            <person name="Heber S."/>
            <person name="Francs P."/>
            <person name="Bielke C."/>
            <person name="Frishman D."/>
            <person name="Haase D."/>
            <person name="Lemcke K."/>
            <person name="Mewes H.-W."/>
            <person name="Stocker S."/>
            <person name="Zaccaria P."/>
            <person name="Bevan M."/>
            <person name="Wilson R.K."/>
            <person name="de la Bastide M."/>
            <person name="Habermann K."/>
            <person name="Parnell L."/>
            <person name="Dedhia N."/>
            <person name="Gnoj L."/>
            <person name="Schutz K."/>
            <person name="Huang E."/>
            <person name="Spiegel L."/>
            <person name="Sekhon M."/>
            <person name="Murray J."/>
            <person name="Sheet P."/>
            <person name="Cordes M."/>
            <person name="Abu-Threideh J."/>
            <person name="Stoneking T."/>
            <person name="Kalicki J."/>
            <person name="Graves T."/>
            <person name="Harmon G."/>
            <person name="Edwards J."/>
            <person name="Latreille P."/>
            <person name="Courtney L."/>
            <person name="Cloud J."/>
            <person name="Abbott A."/>
            <person name="Scott K."/>
            <person name="Johnson D."/>
            <person name="Minx P."/>
            <person name="Bentley D."/>
            <person name="Fulton B."/>
            <person name="Miller N."/>
            <person name="Greco T."/>
            <person name="Kemp K."/>
            <person name="Kramer J."/>
            <person name="Fulton L."/>
            <person name="Mardis E."/>
            <person name="Dante M."/>
            <person name="Pepin K."/>
            <person name="Hillier L.W."/>
            <person name="Nelson J."/>
            <person name="Spieth J."/>
            <person name="Ryan E."/>
            <person name="Andrews S."/>
            <person name="Geisel C."/>
            <person name="Layman D."/>
            <person name="Du H."/>
            <person name="Ali J."/>
            <person name="Berghoff A."/>
            <person name="Jones K."/>
            <person name="Drone K."/>
            <person name="Cotton M."/>
            <person name="Joshu C."/>
            <person name="Antonoiu B."/>
            <person name="Zidanic M."/>
            <person name="Strong C."/>
            <person name="Sun H."/>
            <person name="Lamar B."/>
            <person name="Yordan C."/>
            <person name="Ma P."/>
            <person name="Zhong J."/>
            <person name="Preston R."/>
            <person name="Vil D."/>
            <person name="Shekher M."/>
            <person name="Matero A."/>
            <person name="Shah R."/>
            <person name="Swaby I.K."/>
            <person name="O'Shaughnessy A."/>
            <person name="Rodriguez M."/>
            <person name="Hoffman J."/>
            <person name="Till S."/>
            <person name="Granat S."/>
            <person name="Shohdy N."/>
            <person name="Hasegawa A."/>
            <person name="Hameed A."/>
            <person name="Lodhi M."/>
            <person name="Johnson A."/>
            <person name="Chen E."/>
            <person name="Marra M.A."/>
            <person name="Martienssen R."/>
            <person name="McCombie W.R."/>
        </authorList>
    </citation>
    <scope>NUCLEOTIDE SEQUENCE [LARGE SCALE GENOMIC DNA]</scope>
    <source>
        <strain>cv. Columbia</strain>
    </source>
</reference>
<reference key="2">
    <citation type="journal article" date="2017" name="Plant J.">
        <title>Araport11: a complete reannotation of the Arabidopsis thaliana reference genome.</title>
        <authorList>
            <person name="Cheng C.Y."/>
            <person name="Krishnakumar V."/>
            <person name="Chan A.P."/>
            <person name="Thibaud-Nissen F."/>
            <person name="Schobel S."/>
            <person name="Town C.D."/>
        </authorList>
    </citation>
    <scope>GENOME REANNOTATION</scope>
    <source>
        <strain>cv. Columbia</strain>
    </source>
</reference>
<reference key="3">
    <citation type="journal article" date="2003" name="Science">
        <title>Empirical analysis of transcriptional activity in the Arabidopsis genome.</title>
        <authorList>
            <person name="Yamada K."/>
            <person name="Lim J."/>
            <person name="Dale J.M."/>
            <person name="Chen H."/>
            <person name="Shinn P."/>
            <person name="Palm C.J."/>
            <person name="Southwick A.M."/>
            <person name="Wu H.C."/>
            <person name="Kim C.J."/>
            <person name="Nguyen M."/>
            <person name="Pham P.K."/>
            <person name="Cheuk R.F."/>
            <person name="Karlin-Newmann G."/>
            <person name="Liu S.X."/>
            <person name="Lam B."/>
            <person name="Sakano H."/>
            <person name="Wu T."/>
            <person name="Yu G."/>
            <person name="Miranda M."/>
            <person name="Quach H.L."/>
            <person name="Tripp M."/>
            <person name="Chang C.H."/>
            <person name="Lee J.M."/>
            <person name="Toriumi M.J."/>
            <person name="Chan M.M."/>
            <person name="Tang C.C."/>
            <person name="Onodera C.S."/>
            <person name="Deng J.M."/>
            <person name="Akiyama K."/>
            <person name="Ansari Y."/>
            <person name="Arakawa T."/>
            <person name="Banh J."/>
            <person name="Banno F."/>
            <person name="Bowser L."/>
            <person name="Brooks S.Y."/>
            <person name="Carninci P."/>
            <person name="Chao Q."/>
            <person name="Choy N."/>
            <person name="Enju A."/>
            <person name="Goldsmith A.D."/>
            <person name="Gurjal M."/>
            <person name="Hansen N.F."/>
            <person name="Hayashizaki Y."/>
            <person name="Johnson-Hopson C."/>
            <person name="Hsuan V.W."/>
            <person name="Iida K."/>
            <person name="Karnes M."/>
            <person name="Khan S."/>
            <person name="Koesema E."/>
            <person name="Ishida J."/>
            <person name="Jiang P.X."/>
            <person name="Jones T."/>
            <person name="Kawai J."/>
            <person name="Kamiya A."/>
            <person name="Meyers C."/>
            <person name="Nakajima M."/>
            <person name="Narusaka M."/>
            <person name="Seki M."/>
            <person name="Sakurai T."/>
            <person name="Satou M."/>
            <person name="Tamse R."/>
            <person name="Vaysberg M."/>
            <person name="Wallender E.K."/>
            <person name="Wong C."/>
            <person name="Yamamura Y."/>
            <person name="Yuan S."/>
            <person name="Shinozaki K."/>
            <person name="Davis R.W."/>
            <person name="Theologis A."/>
            <person name="Ecker J.R."/>
        </authorList>
    </citation>
    <scope>NUCLEOTIDE SEQUENCE [LARGE SCALE MRNA]</scope>
    <source>
        <strain>cv. Columbia</strain>
    </source>
</reference>
<reference key="4">
    <citation type="submission" date="2002-03" db="EMBL/GenBank/DDBJ databases">
        <title>Full-length cDNA from Arabidopsis thaliana.</title>
        <authorList>
            <person name="Brover V.V."/>
            <person name="Troukhan M.E."/>
            <person name="Alexandrov N.A."/>
            <person name="Lu Y.-P."/>
            <person name="Flavell R.B."/>
            <person name="Feldmann K.A."/>
        </authorList>
    </citation>
    <scope>NUCLEOTIDE SEQUENCE [LARGE SCALE MRNA]</scope>
</reference>
<reference key="5">
    <citation type="journal article" date="2002" name="Physiol. Plantarum">
        <title>Adenine phosphoribosyltransferase isoforms of Arabidopsis and their potential contributions to adenine and cytokinin metabolism.</title>
        <authorList>
            <person name="Allen M."/>
            <person name="Qin W."/>
            <person name="Moreau F."/>
            <person name="Moffatt B."/>
        </authorList>
    </citation>
    <scope>FUNCTION</scope>
    <scope>CATALYTIC ACTIVITY</scope>
    <scope>BIOPHYSICOCHEMICAL PROPERTIES</scope>
    <scope>SUBCELLULAR LOCATION</scope>
</reference>
<reference key="6">
    <citation type="journal article" date="2013" name="Mol. Plant">
        <title>Adenine phosphoribosyl transferase 1 is a key enzyme catalyzing cytokinin conversion from nucleobases to nucleotides in Arabidopsis.</title>
        <authorList>
            <person name="Zhang X."/>
            <person name="Chen Y."/>
            <person name="Lin X."/>
            <person name="Hong X."/>
            <person name="Zhu Y."/>
            <person name="Li W."/>
            <person name="He W."/>
            <person name="An F."/>
            <person name="Guo H."/>
        </authorList>
    </citation>
    <scope>FUNCTION</scope>
    <scope>DISRUPTION PHENOTYPE</scope>
</reference>
<gene>
    <name type="primary">APT3</name>
    <name type="ordered locus">At4g22570</name>
    <name type="ORF">F7K2.150</name>
</gene>
<proteinExistence type="evidence at protein level"/>
<accession>Q9SUW2</accession>
<accession>Q8LG17</accession>
<evidence type="ECO:0000250" key="1"/>
<evidence type="ECO:0000269" key="2">
    <source>
    </source>
</evidence>
<evidence type="ECO:0000269" key="3">
    <source>
    </source>
</evidence>
<evidence type="ECO:0000305" key="4"/>
<feature type="chain" id="PRO_0000430130" description="Adenine phosphoribosyltransferase 3">
    <location>
        <begin position="1"/>
        <end position="183"/>
    </location>
</feature>
<feature type="sequence conflict" description="In Ref. 4; AAM61081." evidence="4" ref="4">
    <original>A</original>
    <variation>S</variation>
    <location>
        <position position="126"/>
    </location>
</feature>
<comment type="function">
    <text evidence="2 3">Catalyzes a salvage reaction resulting in the formation of AMP, that is energically less costly than de novo synthesis. May contribute to the recycling of adenine into adenylate nucleotides and the inactivation of cytokinins by phosphoribosylation. Possesses low activity toward adenine and cytokinins.</text>
</comment>
<comment type="catalytic activity">
    <reaction evidence="2">
        <text>AMP + diphosphate = 5-phospho-alpha-D-ribose 1-diphosphate + adenine</text>
        <dbReference type="Rhea" id="RHEA:16609"/>
        <dbReference type="ChEBI" id="CHEBI:16708"/>
        <dbReference type="ChEBI" id="CHEBI:33019"/>
        <dbReference type="ChEBI" id="CHEBI:58017"/>
        <dbReference type="ChEBI" id="CHEBI:456215"/>
        <dbReference type="EC" id="2.4.2.7"/>
    </reaction>
</comment>
<comment type="biophysicochemical properties">
    <kinetics>
        <KM evidence="2">0.8 uM for adenine (at pH 7.4 and 37 degrees Celsius)</KM>
        <KM evidence="2">76 uM for zeatin (at pH 7.4 and 37 degrees Celsius)</KM>
        <KM evidence="2">440 uM for isopentenyladenine (at pH 7.4 and 37 degrees Celsius)</KM>
        <KM evidence="2">370 uM for benzyladenine (at pH 7.4 and 37 degrees Celsius)</KM>
        <Vmax evidence="2">0.18 umol/min/mg enzyme with adenine as substrate (at pH 7.4 and 37 degrees Celsius)</Vmax>
        <Vmax evidence="2">0.55 umol/min/mg enzyme with zeatin as substrate (at pH 7.4 and 37 degrees Celsius)</Vmax>
        <Vmax evidence="2">1.6 umol/min/mg enzyme with isopentenyladenine as substrate (at pH 7.4 and 37 degrees Celsius)</Vmax>
        <Vmax evidence="2">0.27 umol/min/mg enzyme with benzyladenine as substrate (at pH 7.4 and 37 degrees Celsius)</Vmax>
    </kinetics>
    <phDependence>
        <text evidence="2">Optimum pH is 7.4-7.5.</text>
    </phDependence>
</comment>
<comment type="pathway">
    <text>Purine metabolism; AMP biosynthesis via salvage pathway; AMP from adenine: step 1/1.</text>
</comment>
<comment type="subunit">
    <text evidence="1">Homodimer.</text>
</comment>
<comment type="subcellular location">
    <subcellularLocation>
        <location evidence="2">Cytoplasm</location>
    </subcellularLocation>
</comment>
<comment type="disruption phenotype">
    <text evidence="3">No visible phenotype under normal growth conditions.</text>
</comment>
<comment type="similarity">
    <text evidence="4">Belongs to the purine/pyrimidine phosphoribosyltransferase family.</text>
</comment>